<gene>
    <name evidence="1" type="primary">rsmG</name>
    <name type="ordered locus">CJE1077</name>
</gene>
<dbReference type="EC" id="2.1.1.170" evidence="1"/>
<dbReference type="EMBL" id="CP000025">
    <property type="protein sequence ID" value="AAW35405.1"/>
    <property type="molecule type" value="Genomic_DNA"/>
</dbReference>
<dbReference type="RefSeq" id="WP_011049829.1">
    <property type="nucleotide sequence ID" value="NC_003912.7"/>
</dbReference>
<dbReference type="SMR" id="Q5HUG5"/>
<dbReference type="KEGG" id="cjr:CJE1077"/>
<dbReference type="HOGENOM" id="CLU_065341_2_1_7"/>
<dbReference type="GO" id="GO:0005829">
    <property type="term" value="C:cytosol"/>
    <property type="evidence" value="ECO:0007669"/>
    <property type="project" value="TreeGrafter"/>
</dbReference>
<dbReference type="GO" id="GO:0070043">
    <property type="term" value="F:rRNA (guanine-N7-)-methyltransferase activity"/>
    <property type="evidence" value="ECO:0007669"/>
    <property type="project" value="UniProtKB-UniRule"/>
</dbReference>
<dbReference type="Gene3D" id="3.40.50.150">
    <property type="entry name" value="Vaccinia Virus protein VP39"/>
    <property type="match status" value="1"/>
</dbReference>
<dbReference type="HAMAP" id="MF_00074">
    <property type="entry name" value="16SrRNA_methyltr_G"/>
    <property type="match status" value="1"/>
</dbReference>
<dbReference type="InterPro" id="IPR003682">
    <property type="entry name" value="rRNA_ssu_MeTfrase_G"/>
</dbReference>
<dbReference type="InterPro" id="IPR029063">
    <property type="entry name" value="SAM-dependent_MTases_sf"/>
</dbReference>
<dbReference type="NCBIfam" id="TIGR00138">
    <property type="entry name" value="rsmG_gidB"/>
    <property type="match status" value="1"/>
</dbReference>
<dbReference type="PANTHER" id="PTHR31760">
    <property type="entry name" value="S-ADENOSYL-L-METHIONINE-DEPENDENT METHYLTRANSFERASES SUPERFAMILY PROTEIN"/>
    <property type="match status" value="1"/>
</dbReference>
<dbReference type="PANTHER" id="PTHR31760:SF0">
    <property type="entry name" value="S-ADENOSYL-L-METHIONINE-DEPENDENT METHYLTRANSFERASES SUPERFAMILY PROTEIN"/>
    <property type="match status" value="1"/>
</dbReference>
<dbReference type="Pfam" id="PF02527">
    <property type="entry name" value="GidB"/>
    <property type="match status" value="1"/>
</dbReference>
<dbReference type="PIRSF" id="PIRSF003078">
    <property type="entry name" value="GidB"/>
    <property type="match status" value="1"/>
</dbReference>
<dbReference type="SUPFAM" id="SSF53335">
    <property type="entry name" value="S-adenosyl-L-methionine-dependent methyltransferases"/>
    <property type="match status" value="1"/>
</dbReference>
<keyword id="KW-0963">Cytoplasm</keyword>
<keyword id="KW-0489">Methyltransferase</keyword>
<keyword id="KW-0698">rRNA processing</keyword>
<keyword id="KW-0949">S-adenosyl-L-methionine</keyword>
<keyword id="KW-0808">Transferase</keyword>
<feature type="chain" id="PRO_0000184232" description="Ribosomal RNA small subunit methyltransferase G">
    <location>
        <begin position="1"/>
        <end position="188"/>
    </location>
</feature>
<feature type="binding site" evidence="1">
    <location>
        <position position="69"/>
    </location>
    <ligand>
        <name>S-adenosyl-L-methionine</name>
        <dbReference type="ChEBI" id="CHEBI:59789"/>
    </ligand>
</feature>
<feature type="binding site" evidence="1">
    <location>
        <position position="74"/>
    </location>
    <ligand>
        <name>S-adenosyl-L-methionine</name>
        <dbReference type="ChEBI" id="CHEBI:59789"/>
    </ligand>
</feature>
<feature type="binding site" evidence="1">
    <location>
        <begin position="119"/>
        <end position="120"/>
    </location>
    <ligand>
        <name>S-adenosyl-L-methionine</name>
        <dbReference type="ChEBI" id="CHEBI:59789"/>
    </ligand>
</feature>
<feature type="binding site" evidence="1">
    <location>
        <position position="134"/>
    </location>
    <ligand>
        <name>S-adenosyl-L-methionine</name>
        <dbReference type="ChEBI" id="CHEBI:59789"/>
    </ligand>
</feature>
<protein>
    <recommendedName>
        <fullName evidence="1">Ribosomal RNA small subunit methyltransferase G</fullName>
        <ecNumber evidence="1">2.1.1.170</ecNumber>
    </recommendedName>
    <alternativeName>
        <fullName evidence="1">16S rRNA 7-methylguanosine methyltransferase</fullName>
        <shortName evidence="1">16S rRNA m7G methyltransferase</shortName>
    </alternativeName>
</protein>
<name>RSMG_CAMJR</name>
<accession>Q5HUG5</accession>
<sequence length="188" mass="22323">MIFKDYDFLQNYDLKNFEEKVKIYKELLSKFNRIHNLTHLKNIDENIFDSIKILDFYDFSKAKNIADIGSGAGFPAVFLAFLLQGNFHLFEPNPKKAAFLRTLKIECELSNLHIYKEKVQEYQNIFKADIITSRALMDVKPLLEICKNLKDENTVFILWKGSEIYQELENIKDYEIFENNLRKYCILK</sequence>
<comment type="function">
    <text evidence="1">Specifically methylates the N7 position of guanine in position 527 of 16S rRNA.</text>
</comment>
<comment type="catalytic activity">
    <reaction evidence="1">
        <text>guanosine(527) in 16S rRNA + S-adenosyl-L-methionine = N(7)-methylguanosine(527) in 16S rRNA + S-adenosyl-L-homocysteine</text>
        <dbReference type="Rhea" id="RHEA:42732"/>
        <dbReference type="Rhea" id="RHEA-COMP:10209"/>
        <dbReference type="Rhea" id="RHEA-COMP:10210"/>
        <dbReference type="ChEBI" id="CHEBI:57856"/>
        <dbReference type="ChEBI" id="CHEBI:59789"/>
        <dbReference type="ChEBI" id="CHEBI:74269"/>
        <dbReference type="ChEBI" id="CHEBI:74480"/>
        <dbReference type="EC" id="2.1.1.170"/>
    </reaction>
</comment>
<comment type="subcellular location">
    <subcellularLocation>
        <location evidence="1">Cytoplasm</location>
    </subcellularLocation>
</comment>
<comment type="similarity">
    <text evidence="1">Belongs to the methyltransferase superfamily. RNA methyltransferase RsmG family.</text>
</comment>
<proteinExistence type="inferred from homology"/>
<evidence type="ECO:0000255" key="1">
    <source>
        <dbReference type="HAMAP-Rule" id="MF_00074"/>
    </source>
</evidence>
<reference key="1">
    <citation type="journal article" date="2005" name="PLoS Biol.">
        <title>Major structural differences and novel potential virulence mechanisms from the genomes of multiple Campylobacter species.</title>
        <authorList>
            <person name="Fouts D.E."/>
            <person name="Mongodin E.F."/>
            <person name="Mandrell R.E."/>
            <person name="Miller W.G."/>
            <person name="Rasko D.A."/>
            <person name="Ravel J."/>
            <person name="Brinkac L.M."/>
            <person name="DeBoy R.T."/>
            <person name="Parker C.T."/>
            <person name="Daugherty S.C."/>
            <person name="Dodson R.J."/>
            <person name="Durkin A.S."/>
            <person name="Madupu R."/>
            <person name="Sullivan S.A."/>
            <person name="Shetty J.U."/>
            <person name="Ayodeji M.A."/>
            <person name="Shvartsbeyn A."/>
            <person name="Schatz M.C."/>
            <person name="Badger J.H."/>
            <person name="Fraser C.M."/>
            <person name="Nelson K.E."/>
        </authorList>
    </citation>
    <scope>NUCLEOTIDE SEQUENCE [LARGE SCALE GENOMIC DNA]</scope>
    <source>
        <strain>RM1221</strain>
    </source>
</reference>
<organism>
    <name type="scientific">Campylobacter jejuni (strain RM1221)</name>
    <dbReference type="NCBI Taxonomy" id="195099"/>
    <lineage>
        <taxon>Bacteria</taxon>
        <taxon>Pseudomonadati</taxon>
        <taxon>Campylobacterota</taxon>
        <taxon>Epsilonproteobacteria</taxon>
        <taxon>Campylobacterales</taxon>
        <taxon>Campylobacteraceae</taxon>
        <taxon>Campylobacter</taxon>
    </lineage>
</organism>